<gene>
    <name evidence="1" type="primary">minE</name>
    <name type="ordered locus">SYNAS_09540</name>
    <name type="ORF">SYN_02706</name>
</gene>
<evidence type="ECO:0000255" key="1">
    <source>
        <dbReference type="HAMAP-Rule" id="MF_00262"/>
    </source>
</evidence>
<evidence type="ECO:0000305" key="2"/>
<dbReference type="EMBL" id="CP000252">
    <property type="protein sequence ID" value="ABC76833.1"/>
    <property type="status" value="ALT_INIT"/>
    <property type="molecule type" value="Genomic_DNA"/>
</dbReference>
<dbReference type="RefSeq" id="WP_041584718.1">
    <property type="nucleotide sequence ID" value="NC_007759.1"/>
</dbReference>
<dbReference type="SMR" id="Q2LRX3"/>
<dbReference type="FunCoup" id="Q2LRX3">
    <property type="interactions" value="102"/>
</dbReference>
<dbReference type="STRING" id="56780.SYN_02706"/>
<dbReference type="KEGG" id="sat:SYN_02706"/>
<dbReference type="eggNOG" id="COG0851">
    <property type="taxonomic scope" value="Bacteria"/>
</dbReference>
<dbReference type="HOGENOM" id="CLU_137929_2_2_7"/>
<dbReference type="InParanoid" id="Q2LRX3"/>
<dbReference type="OrthoDB" id="9802655at2"/>
<dbReference type="Proteomes" id="UP000001933">
    <property type="component" value="Chromosome"/>
</dbReference>
<dbReference type="GO" id="GO:0051301">
    <property type="term" value="P:cell division"/>
    <property type="evidence" value="ECO:0007669"/>
    <property type="project" value="UniProtKB-KW"/>
</dbReference>
<dbReference type="GO" id="GO:0032955">
    <property type="term" value="P:regulation of division septum assembly"/>
    <property type="evidence" value="ECO:0007669"/>
    <property type="project" value="InterPro"/>
</dbReference>
<dbReference type="FunFam" id="3.30.1070.10:FF:000001">
    <property type="entry name" value="Cell division topological specificity factor"/>
    <property type="match status" value="1"/>
</dbReference>
<dbReference type="Gene3D" id="3.30.1070.10">
    <property type="entry name" value="Cell division topological specificity factor MinE"/>
    <property type="match status" value="1"/>
</dbReference>
<dbReference type="HAMAP" id="MF_00262">
    <property type="entry name" value="MinE"/>
    <property type="match status" value="1"/>
</dbReference>
<dbReference type="InterPro" id="IPR005527">
    <property type="entry name" value="MinE"/>
</dbReference>
<dbReference type="InterPro" id="IPR036707">
    <property type="entry name" value="MinE_sf"/>
</dbReference>
<dbReference type="NCBIfam" id="TIGR01215">
    <property type="entry name" value="minE"/>
    <property type="match status" value="1"/>
</dbReference>
<dbReference type="NCBIfam" id="NF001422">
    <property type="entry name" value="PRK00296.1"/>
    <property type="match status" value="1"/>
</dbReference>
<dbReference type="Pfam" id="PF03776">
    <property type="entry name" value="MinE"/>
    <property type="match status" value="1"/>
</dbReference>
<dbReference type="SUPFAM" id="SSF55229">
    <property type="entry name" value="Cell division protein MinE topological specificity domain"/>
    <property type="match status" value="1"/>
</dbReference>
<reference key="1">
    <citation type="journal article" date="2007" name="Proc. Natl. Acad. Sci. U.S.A.">
        <title>The genome of Syntrophus aciditrophicus: life at the thermodynamic limit of microbial growth.</title>
        <authorList>
            <person name="McInerney M.J."/>
            <person name="Rohlin L."/>
            <person name="Mouttaki H."/>
            <person name="Kim U."/>
            <person name="Krupp R.S."/>
            <person name="Rios-Hernandez L."/>
            <person name="Sieber J."/>
            <person name="Struchtemeyer C.G."/>
            <person name="Bhattacharyya A."/>
            <person name="Campbell J.W."/>
            <person name="Gunsalus R.P."/>
        </authorList>
    </citation>
    <scope>NUCLEOTIDE SEQUENCE [LARGE SCALE GENOMIC DNA]</scope>
    <source>
        <strain>SB</strain>
    </source>
</reference>
<organism>
    <name type="scientific">Syntrophus aciditrophicus (strain SB)</name>
    <dbReference type="NCBI Taxonomy" id="56780"/>
    <lineage>
        <taxon>Bacteria</taxon>
        <taxon>Pseudomonadati</taxon>
        <taxon>Thermodesulfobacteriota</taxon>
        <taxon>Syntrophia</taxon>
        <taxon>Syntrophales</taxon>
        <taxon>Syntrophaceae</taxon>
        <taxon>Syntrophus</taxon>
    </lineage>
</organism>
<sequence>MSILDYLRSLQKRRSASIAKERLQIIVAHERNGLSRRTLDFLPLLQKELLDVVRKYVEVSDSQIKVNLEKNGNYEVLEVNIALADAEGRFSMS</sequence>
<comment type="function">
    <text evidence="1">Prevents the cell division inhibition by proteins MinC and MinD at internal division sites while permitting inhibition at polar sites. This ensures cell division at the proper site by restricting the formation of a division septum at the midpoint of the long axis of the cell.</text>
</comment>
<comment type="similarity">
    <text evidence="1">Belongs to the MinE family.</text>
</comment>
<comment type="sequence caution" evidence="2">
    <conflict type="erroneous initiation">
        <sequence resource="EMBL-CDS" id="ABC76833"/>
    </conflict>
</comment>
<protein>
    <recommendedName>
        <fullName evidence="1">Cell division topological specificity factor</fullName>
    </recommendedName>
</protein>
<name>MINE_SYNAS</name>
<keyword id="KW-0131">Cell cycle</keyword>
<keyword id="KW-0132">Cell division</keyword>
<keyword id="KW-1185">Reference proteome</keyword>
<feature type="chain" id="PRO_0000298208" description="Cell division topological specificity factor">
    <location>
        <begin position="1"/>
        <end position="93"/>
    </location>
</feature>
<proteinExistence type="inferred from homology"/>
<accession>Q2LRX3</accession>